<dbReference type="EC" id="2.3.1.181" evidence="1"/>
<dbReference type="EMBL" id="CP000950">
    <property type="protein sequence ID" value="ACA69299.1"/>
    <property type="molecule type" value="Genomic_DNA"/>
</dbReference>
<dbReference type="RefSeq" id="WP_012304393.1">
    <property type="nucleotide sequence ID" value="NZ_CP009792.1"/>
</dbReference>
<dbReference type="SMR" id="B1JGB6"/>
<dbReference type="KEGG" id="ypy:YPK_3026"/>
<dbReference type="UniPathway" id="UPA00538">
    <property type="reaction ID" value="UER00592"/>
</dbReference>
<dbReference type="GO" id="GO:0005737">
    <property type="term" value="C:cytoplasm"/>
    <property type="evidence" value="ECO:0007669"/>
    <property type="project" value="UniProtKB-SubCell"/>
</dbReference>
<dbReference type="GO" id="GO:0033819">
    <property type="term" value="F:lipoyl(octanoyl) transferase activity"/>
    <property type="evidence" value="ECO:0007669"/>
    <property type="project" value="UniProtKB-EC"/>
</dbReference>
<dbReference type="GO" id="GO:0036211">
    <property type="term" value="P:protein modification process"/>
    <property type="evidence" value="ECO:0007669"/>
    <property type="project" value="InterPro"/>
</dbReference>
<dbReference type="CDD" id="cd16444">
    <property type="entry name" value="LipB"/>
    <property type="match status" value="1"/>
</dbReference>
<dbReference type="FunFam" id="3.30.930.10:FF:000020">
    <property type="entry name" value="Octanoyltransferase"/>
    <property type="match status" value="1"/>
</dbReference>
<dbReference type="Gene3D" id="3.30.930.10">
    <property type="entry name" value="Bira Bifunctional Protein, Domain 2"/>
    <property type="match status" value="1"/>
</dbReference>
<dbReference type="HAMAP" id="MF_00013">
    <property type="entry name" value="LipB"/>
    <property type="match status" value="1"/>
</dbReference>
<dbReference type="InterPro" id="IPR045864">
    <property type="entry name" value="aa-tRNA-synth_II/BPL/LPL"/>
</dbReference>
<dbReference type="InterPro" id="IPR004143">
    <property type="entry name" value="BPL_LPL_catalytic"/>
</dbReference>
<dbReference type="InterPro" id="IPR000544">
    <property type="entry name" value="Octanoyltransferase"/>
</dbReference>
<dbReference type="InterPro" id="IPR020605">
    <property type="entry name" value="Octanoyltransferase_CS"/>
</dbReference>
<dbReference type="NCBIfam" id="TIGR00214">
    <property type="entry name" value="lipB"/>
    <property type="match status" value="1"/>
</dbReference>
<dbReference type="NCBIfam" id="NF010922">
    <property type="entry name" value="PRK14342.1"/>
    <property type="match status" value="1"/>
</dbReference>
<dbReference type="PANTHER" id="PTHR10993:SF7">
    <property type="entry name" value="LIPOYLTRANSFERASE 2, MITOCHONDRIAL-RELATED"/>
    <property type="match status" value="1"/>
</dbReference>
<dbReference type="PANTHER" id="PTHR10993">
    <property type="entry name" value="OCTANOYLTRANSFERASE"/>
    <property type="match status" value="1"/>
</dbReference>
<dbReference type="Pfam" id="PF21948">
    <property type="entry name" value="LplA-B_cat"/>
    <property type="match status" value="1"/>
</dbReference>
<dbReference type="PIRSF" id="PIRSF016262">
    <property type="entry name" value="LPLase"/>
    <property type="match status" value="1"/>
</dbReference>
<dbReference type="SUPFAM" id="SSF55681">
    <property type="entry name" value="Class II aaRS and biotin synthetases"/>
    <property type="match status" value="1"/>
</dbReference>
<dbReference type="PROSITE" id="PS51733">
    <property type="entry name" value="BPL_LPL_CATALYTIC"/>
    <property type="match status" value="1"/>
</dbReference>
<dbReference type="PROSITE" id="PS01313">
    <property type="entry name" value="LIPB"/>
    <property type="match status" value="1"/>
</dbReference>
<evidence type="ECO:0000255" key="1">
    <source>
        <dbReference type="HAMAP-Rule" id="MF_00013"/>
    </source>
</evidence>
<evidence type="ECO:0000255" key="2">
    <source>
        <dbReference type="PROSITE-ProRule" id="PRU01067"/>
    </source>
</evidence>
<accession>B1JGB6</accession>
<comment type="function">
    <text evidence="1">Catalyzes the transfer of endogenously produced octanoic acid from octanoyl-acyl-carrier-protein onto the lipoyl domains of lipoate-dependent enzymes. Lipoyl-ACP can also act as a substrate although octanoyl-ACP is likely to be the physiological substrate.</text>
</comment>
<comment type="catalytic activity">
    <reaction evidence="1">
        <text>octanoyl-[ACP] + L-lysyl-[protein] = N(6)-octanoyl-L-lysyl-[protein] + holo-[ACP] + H(+)</text>
        <dbReference type="Rhea" id="RHEA:17665"/>
        <dbReference type="Rhea" id="RHEA-COMP:9636"/>
        <dbReference type="Rhea" id="RHEA-COMP:9685"/>
        <dbReference type="Rhea" id="RHEA-COMP:9752"/>
        <dbReference type="Rhea" id="RHEA-COMP:9928"/>
        <dbReference type="ChEBI" id="CHEBI:15378"/>
        <dbReference type="ChEBI" id="CHEBI:29969"/>
        <dbReference type="ChEBI" id="CHEBI:64479"/>
        <dbReference type="ChEBI" id="CHEBI:78463"/>
        <dbReference type="ChEBI" id="CHEBI:78809"/>
        <dbReference type="EC" id="2.3.1.181"/>
    </reaction>
</comment>
<comment type="pathway">
    <text evidence="1">Protein modification; protein lipoylation via endogenous pathway; protein N(6)-(lipoyl)lysine from octanoyl-[acyl-carrier-protein]: step 1/2.</text>
</comment>
<comment type="subcellular location">
    <subcellularLocation>
        <location evidence="1">Cytoplasm</location>
    </subcellularLocation>
</comment>
<comment type="miscellaneous">
    <text evidence="1">In the reaction, the free carboxyl group of octanoic acid is attached via an amide linkage to the epsilon-amino group of a specific lysine residue of lipoyl domains of lipoate-dependent enzymes.</text>
</comment>
<comment type="similarity">
    <text evidence="1">Belongs to the LipB family.</text>
</comment>
<feature type="chain" id="PRO_1000089484" description="Octanoyltransferase">
    <location>
        <begin position="1"/>
        <end position="233"/>
    </location>
</feature>
<feature type="domain" description="BPL/LPL catalytic" evidence="2">
    <location>
        <begin position="36"/>
        <end position="211"/>
    </location>
</feature>
<feature type="active site" description="Acyl-thioester intermediate" evidence="1">
    <location>
        <position position="173"/>
    </location>
</feature>
<feature type="binding site" evidence="1">
    <location>
        <begin position="75"/>
        <end position="82"/>
    </location>
    <ligand>
        <name>substrate</name>
    </ligand>
</feature>
<feature type="binding site" evidence="1">
    <location>
        <begin position="142"/>
        <end position="144"/>
    </location>
    <ligand>
        <name>substrate</name>
    </ligand>
</feature>
<feature type="binding site" evidence="1">
    <location>
        <begin position="155"/>
        <end position="157"/>
    </location>
    <ligand>
        <name>substrate</name>
    </ligand>
</feature>
<feature type="site" description="Lowers pKa of active site Cys" evidence="1">
    <location>
        <position position="139"/>
    </location>
</feature>
<keyword id="KW-0012">Acyltransferase</keyword>
<keyword id="KW-0963">Cytoplasm</keyword>
<keyword id="KW-0808">Transferase</keyword>
<proteinExistence type="inferred from homology"/>
<protein>
    <recommendedName>
        <fullName evidence="1">Octanoyltransferase</fullName>
        <ecNumber evidence="1">2.3.1.181</ecNumber>
    </recommendedName>
    <alternativeName>
        <fullName evidence="1">Lipoate-protein ligase B</fullName>
    </alternativeName>
    <alternativeName>
        <fullName evidence="1">Lipoyl/octanoyl transferase</fullName>
    </alternativeName>
    <alternativeName>
        <fullName evidence="1">Octanoyl-[acyl-carrier-protein]-protein N-octanoyltransferase</fullName>
    </alternativeName>
</protein>
<organism>
    <name type="scientific">Yersinia pseudotuberculosis serotype O:3 (strain YPIII)</name>
    <dbReference type="NCBI Taxonomy" id="502800"/>
    <lineage>
        <taxon>Bacteria</taxon>
        <taxon>Pseudomonadati</taxon>
        <taxon>Pseudomonadota</taxon>
        <taxon>Gammaproteobacteria</taxon>
        <taxon>Enterobacterales</taxon>
        <taxon>Yersiniaceae</taxon>
        <taxon>Yersinia</taxon>
    </lineage>
</organism>
<reference key="1">
    <citation type="submission" date="2008-02" db="EMBL/GenBank/DDBJ databases">
        <title>Complete sequence of Yersinia pseudotuberculosis YPIII.</title>
        <authorList>
            <consortium name="US DOE Joint Genome Institute"/>
            <person name="Copeland A."/>
            <person name="Lucas S."/>
            <person name="Lapidus A."/>
            <person name="Glavina del Rio T."/>
            <person name="Dalin E."/>
            <person name="Tice H."/>
            <person name="Bruce D."/>
            <person name="Goodwin L."/>
            <person name="Pitluck S."/>
            <person name="Munk A.C."/>
            <person name="Brettin T."/>
            <person name="Detter J.C."/>
            <person name="Han C."/>
            <person name="Tapia R."/>
            <person name="Schmutz J."/>
            <person name="Larimer F."/>
            <person name="Land M."/>
            <person name="Hauser L."/>
            <person name="Challacombe J.F."/>
            <person name="Green L."/>
            <person name="Lindler L.E."/>
            <person name="Nikolich M.P."/>
            <person name="Richardson P."/>
        </authorList>
    </citation>
    <scope>NUCLEOTIDE SEQUENCE [LARGE SCALE GENOMIC DNA]</scope>
    <source>
        <strain>YPIII</strain>
    </source>
</reference>
<gene>
    <name evidence="1" type="primary">lipB</name>
    <name type="ordered locus">YPK_3026</name>
</gene>
<sequence length="233" mass="26025">MMPRLQQHKIILRQLGLQPYAPVSQAMHNFTEFRTDTTPDEIWLVEHQHVFTQGQAGKTEHVLMPGDIPVIQSDRGGQVTYHGPGQQVMYVMVDLKRAKIGVRQLVTAIENTVIETLAHFNIDSHARPDAPGVYVEQQKICSLGLRIRRGCSFHGLALNIAMDLEPFQRINPCGYAGMQMTQVSALQPGVTVADVQPVLVREFTRQLGYPTAKLQPWSLSDYLLSSHSSSSVL</sequence>
<name>LIPB_YERPY</name>